<reference key="1">
    <citation type="journal article" date="2012" name="MBio">
        <title>Comparative genome analysis of Trichophyton rubrum and related dermatophytes reveals candidate genes involved in infection.</title>
        <authorList>
            <person name="Martinez D.A."/>
            <person name="Oliver B.G."/>
            <person name="Graeser Y."/>
            <person name="Goldberg J.M."/>
            <person name="Li W."/>
            <person name="Martinez-Rossi N.M."/>
            <person name="Monod M."/>
            <person name="Shelest E."/>
            <person name="Barton R.C."/>
            <person name="Birch E."/>
            <person name="Brakhage A.A."/>
            <person name="Chen Z."/>
            <person name="Gurr S.J."/>
            <person name="Heiman D."/>
            <person name="Heitman J."/>
            <person name="Kosti I."/>
            <person name="Rossi A."/>
            <person name="Saif S."/>
            <person name="Samalova M."/>
            <person name="Saunders C.W."/>
            <person name="Shea T."/>
            <person name="Summerbell R.C."/>
            <person name="Xu J."/>
            <person name="Young S."/>
            <person name="Zeng Q."/>
            <person name="Birren B.W."/>
            <person name="Cuomo C.A."/>
            <person name="White T.C."/>
        </authorList>
    </citation>
    <scope>NUCLEOTIDE SEQUENCE [LARGE SCALE GENOMIC DNA]</scope>
    <source>
        <strain>ATCC MYA-4605 / CBS 113480</strain>
    </source>
</reference>
<sequence>MKVSVLAAVAAFAAATAIAGPVRPAGVGNDKYLIELAPGKTQWVTKNEKHQMKAAGQTFIDITDEFGTGFTASQPVSANYPKNSRHSSIVAPIIANLSKENLMRDLKAMIEFNNRYYESQTGVESATWLMEQVQKAIDASGIQGAKVEKFENQFQQFSIIATIPGSESTVVIGAHQDSINEQDPEGGRAPGADDNGSGSVVVLEALRGVLGSKALQAANNTNTMEFHWYAGEEGGLLGSNAIFKKYKSDGRQIKAMLNQDLAGFVKKGGPEQFGLITDNTNQELNQFCKMIVKKYASIPIVDTKCGYACSDHASADRSGFPASMVAETAFRDSNPHIHSADDVTDYLDFDHMLEHAKVAVGFMTELAMASNL</sequence>
<organism>
    <name type="scientific">Arthroderma otae (strain ATCC MYA-4605 / CBS 113480)</name>
    <name type="common">Microsporum canis</name>
    <dbReference type="NCBI Taxonomy" id="554155"/>
    <lineage>
        <taxon>Eukaryota</taxon>
        <taxon>Fungi</taxon>
        <taxon>Dikarya</taxon>
        <taxon>Ascomycota</taxon>
        <taxon>Pezizomycotina</taxon>
        <taxon>Eurotiomycetes</taxon>
        <taxon>Eurotiomycetidae</taxon>
        <taxon>Onygenales</taxon>
        <taxon>Arthrodermataceae</taxon>
        <taxon>Microsporum</taxon>
    </lineage>
</organism>
<evidence type="ECO:0000250" key="1"/>
<evidence type="ECO:0000255" key="2"/>
<evidence type="ECO:0000305" key="3"/>
<feature type="signal peptide" evidence="2">
    <location>
        <begin position="1"/>
        <end position="19"/>
    </location>
</feature>
<feature type="chain" id="PRO_0000390759" description="Probable leucine aminopeptidase MCYG_08380">
    <location>
        <begin position="20"/>
        <end position="372"/>
    </location>
</feature>
<feature type="binding site" evidence="1">
    <location>
        <position position="175"/>
    </location>
    <ligand>
        <name>Zn(2+)</name>
        <dbReference type="ChEBI" id="CHEBI:29105"/>
        <label>1</label>
    </ligand>
</feature>
<feature type="binding site" evidence="1">
    <location>
        <position position="194"/>
    </location>
    <ligand>
        <name>Zn(2+)</name>
        <dbReference type="ChEBI" id="CHEBI:29105"/>
        <label>1</label>
    </ligand>
</feature>
<feature type="binding site" evidence="1">
    <location>
        <position position="194"/>
    </location>
    <ligand>
        <name>Zn(2+)</name>
        <dbReference type="ChEBI" id="CHEBI:29105"/>
        <label>2</label>
        <note>catalytic</note>
    </ligand>
</feature>
<feature type="binding site" evidence="1">
    <location>
        <position position="233"/>
    </location>
    <ligand>
        <name>Zn(2+)</name>
        <dbReference type="ChEBI" id="CHEBI:29105"/>
        <label>2</label>
        <note>catalytic</note>
    </ligand>
</feature>
<feature type="binding site" evidence="1">
    <location>
        <position position="260"/>
    </location>
    <ligand>
        <name>Zn(2+)</name>
        <dbReference type="ChEBI" id="CHEBI:29105"/>
        <label>1</label>
    </ligand>
</feature>
<feature type="binding site" evidence="1">
    <location>
        <position position="338"/>
    </location>
    <ligand>
        <name>Zn(2+)</name>
        <dbReference type="ChEBI" id="CHEBI:29105"/>
        <label>2</label>
        <note>catalytic</note>
    </ligand>
</feature>
<feature type="glycosylation site" description="N-linked (GlcNAc...) asparagine" evidence="2">
    <location>
        <position position="96"/>
    </location>
</feature>
<feature type="glycosylation site" description="N-linked (GlcNAc...) asparagine" evidence="2">
    <location>
        <position position="195"/>
    </location>
</feature>
<feature type="glycosylation site" description="N-linked (GlcNAc...) asparagine" evidence="2">
    <location>
        <position position="219"/>
    </location>
</feature>
<feature type="disulfide bond" evidence="1">
    <location>
        <begin position="305"/>
        <end position="309"/>
    </location>
</feature>
<keyword id="KW-0031">Aminopeptidase</keyword>
<keyword id="KW-1015">Disulfide bond</keyword>
<keyword id="KW-0325">Glycoprotein</keyword>
<keyword id="KW-0378">Hydrolase</keyword>
<keyword id="KW-0479">Metal-binding</keyword>
<keyword id="KW-0645">Protease</keyword>
<keyword id="KW-1185">Reference proteome</keyword>
<keyword id="KW-0964">Secreted</keyword>
<keyword id="KW-0732">Signal</keyword>
<keyword id="KW-0843">Virulence</keyword>
<keyword id="KW-0862">Zinc</keyword>
<gene>
    <name type="ORF">MCYG_08380</name>
</gene>
<dbReference type="EC" id="3.4.11.-"/>
<dbReference type="EMBL" id="DS995708">
    <property type="protein sequence ID" value="EEQ35561.1"/>
    <property type="molecule type" value="Genomic_DNA"/>
</dbReference>
<dbReference type="RefSeq" id="XP_002843297.1">
    <property type="nucleotide sequence ID" value="XM_002843251.1"/>
</dbReference>
<dbReference type="SMR" id="C5G0A8"/>
<dbReference type="STRING" id="554155.C5G0A8"/>
<dbReference type="MEROPS" id="M28.022"/>
<dbReference type="GeneID" id="9227694"/>
<dbReference type="VEuPathDB" id="FungiDB:MCYG_08380"/>
<dbReference type="eggNOG" id="KOG2195">
    <property type="taxonomic scope" value="Eukaryota"/>
</dbReference>
<dbReference type="HOGENOM" id="CLU_025866_0_0_1"/>
<dbReference type="OMA" id="DHASWYK"/>
<dbReference type="OrthoDB" id="2214at2759"/>
<dbReference type="Proteomes" id="UP000002035">
    <property type="component" value="Unassembled WGS sequence"/>
</dbReference>
<dbReference type="GO" id="GO:0005576">
    <property type="term" value="C:extracellular region"/>
    <property type="evidence" value="ECO:0007669"/>
    <property type="project" value="UniProtKB-SubCell"/>
</dbReference>
<dbReference type="GO" id="GO:0004177">
    <property type="term" value="F:aminopeptidase activity"/>
    <property type="evidence" value="ECO:0007669"/>
    <property type="project" value="UniProtKB-KW"/>
</dbReference>
<dbReference type="GO" id="GO:0046872">
    <property type="term" value="F:metal ion binding"/>
    <property type="evidence" value="ECO:0007669"/>
    <property type="project" value="UniProtKB-KW"/>
</dbReference>
<dbReference type="GO" id="GO:0008235">
    <property type="term" value="F:metalloexopeptidase activity"/>
    <property type="evidence" value="ECO:0007669"/>
    <property type="project" value="InterPro"/>
</dbReference>
<dbReference type="GO" id="GO:0006508">
    <property type="term" value="P:proteolysis"/>
    <property type="evidence" value="ECO:0007669"/>
    <property type="project" value="UniProtKB-KW"/>
</dbReference>
<dbReference type="CDD" id="cd03879">
    <property type="entry name" value="M28_AAP"/>
    <property type="match status" value="1"/>
</dbReference>
<dbReference type="FunFam" id="3.40.630.10:FF:000042">
    <property type="entry name" value="Peptide hydrolase"/>
    <property type="match status" value="1"/>
</dbReference>
<dbReference type="Gene3D" id="3.40.630.10">
    <property type="entry name" value="Zn peptidases"/>
    <property type="match status" value="1"/>
</dbReference>
<dbReference type="InterPro" id="IPR045175">
    <property type="entry name" value="M28_fam"/>
</dbReference>
<dbReference type="InterPro" id="IPR007484">
    <property type="entry name" value="Peptidase_M28"/>
</dbReference>
<dbReference type="PANTHER" id="PTHR12147:SF56">
    <property type="entry name" value="AMINOPEPTIDASE YDR415C-RELATED"/>
    <property type="match status" value="1"/>
</dbReference>
<dbReference type="PANTHER" id="PTHR12147">
    <property type="entry name" value="METALLOPEPTIDASE M28 FAMILY MEMBER"/>
    <property type="match status" value="1"/>
</dbReference>
<dbReference type="Pfam" id="PF04389">
    <property type="entry name" value="Peptidase_M28"/>
    <property type="match status" value="1"/>
</dbReference>
<dbReference type="SUPFAM" id="SSF53187">
    <property type="entry name" value="Zn-dependent exopeptidases"/>
    <property type="match status" value="1"/>
</dbReference>
<proteinExistence type="inferred from homology"/>
<accession>C5G0A8</accession>
<comment type="function">
    <text evidence="1">Probable extracellular aminopeptidase which contributes to pathogenicity.</text>
</comment>
<comment type="cofactor">
    <cofactor evidence="1">
        <name>Zn(2+)</name>
        <dbReference type="ChEBI" id="CHEBI:29105"/>
    </cofactor>
    <text evidence="1">Binds 2 Zn(2+) ions per subunit.</text>
</comment>
<comment type="subunit">
    <text evidence="1">Monomer.</text>
</comment>
<comment type="subcellular location">
    <subcellularLocation>
        <location evidence="1">Secreted</location>
    </subcellularLocation>
</comment>
<comment type="similarity">
    <text evidence="3">Belongs to the peptidase M28 family. M28E subfamily.</text>
</comment>
<protein>
    <recommendedName>
        <fullName>Probable leucine aminopeptidase MCYG_08380</fullName>
        <ecNumber>3.4.11.-</ecNumber>
    </recommendedName>
    <alternativeName>
        <fullName>Leucyl aminopeptidase MCYG_08380</fullName>
    </alternativeName>
</protein>
<name>LAP3_ARTOC</name>